<reference key="1">
    <citation type="journal article" date="2009" name="PLoS ONE">
        <title>Genome sequence of the pathogenic intestinal spirochete Brachyspira hyodysenteriae reveals adaptations to its lifestyle in the porcine large intestine.</title>
        <authorList>
            <person name="Bellgard M.I."/>
            <person name="Wanchanthuek P."/>
            <person name="La T."/>
            <person name="Ryan K."/>
            <person name="Moolhuijzen P."/>
            <person name="Albertyn Z."/>
            <person name="Shaban B."/>
            <person name="Motro Y."/>
            <person name="Dunn D.S."/>
            <person name="Schibeci D."/>
            <person name="Hunter A."/>
            <person name="Barrero R."/>
            <person name="Phillips N.D."/>
            <person name="Hampson D.J."/>
        </authorList>
    </citation>
    <scope>NUCLEOTIDE SEQUENCE [LARGE SCALE GENOMIC DNA]</scope>
    <source>
        <strain>ATCC 49526 / WA1</strain>
    </source>
</reference>
<name>ACP_BRAHW</name>
<protein>
    <recommendedName>
        <fullName evidence="1">Acyl carrier protein</fullName>
        <shortName evidence="1">ACP</shortName>
    </recommendedName>
</protein>
<organism>
    <name type="scientific">Brachyspira hyodysenteriae (strain ATCC 49526 / WA1)</name>
    <dbReference type="NCBI Taxonomy" id="565034"/>
    <lineage>
        <taxon>Bacteria</taxon>
        <taxon>Pseudomonadati</taxon>
        <taxon>Spirochaetota</taxon>
        <taxon>Spirochaetia</taxon>
        <taxon>Brachyspirales</taxon>
        <taxon>Brachyspiraceae</taxon>
        <taxon>Brachyspira</taxon>
    </lineage>
</organism>
<proteinExistence type="inferred from homology"/>
<comment type="function">
    <text evidence="1">Carrier of the growing fatty acid chain in fatty acid biosynthesis.</text>
</comment>
<comment type="pathway">
    <text evidence="1">Lipid metabolism; fatty acid biosynthesis.</text>
</comment>
<comment type="subcellular location">
    <subcellularLocation>
        <location evidence="1">Cytoplasm</location>
    </subcellularLocation>
</comment>
<comment type="PTM">
    <text evidence="1">4'-phosphopantetheine is transferred from CoA to a specific serine of apo-ACP by AcpS. This modification is essential for activity because fatty acids are bound in thioester linkage to the sulfhydryl of the prosthetic group.</text>
</comment>
<comment type="similarity">
    <text evidence="1">Belongs to the acyl carrier protein (ACP) family.</text>
</comment>
<gene>
    <name evidence="1" type="primary">acpP</name>
    <name type="ordered locus">BHWA1_02643</name>
</gene>
<feature type="chain" id="PRO_1000164772" description="Acyl carrier protein">
    <location>
        <begin position="1"/>
        <end position="78"/>
    </location>
</feature>
<feature type="domain" description="Carrier" evidence="2">
    <location>
        <begin position="1"/>
        <end position="77"/>
    </location>
</feature>
<feature type="modified residue" description="O-(pantetheine 4'-phosphoryl)serine" evidence="2">
    <location>
        <position position="37"/>
    </location>
</feature>
<keyword id="KW-0963">Cytoplasm</keyword>
<keyword id="KW-0275">Fatty acid biosynthesis</keyword>
<keyword id="KW-0276">Fatty acid metabolism</keyword>
<keyword id="KW-0444">Lipid biosynthesis</keyword>
<keyword id="KW-0443">Lipid metabolism</keyword>
<keyword id="KW-0596">Phosphopantetheine</keyword>
<keyword id="KW-0597">Phosphoprotein</keyword>
<evidence type="ECO:0000255" key="1">
    <source>
        <dbReference type="HAMAP-Rule" id="MF_01217"/>
    </source>
</evidence>
<evidence type="ECO:0000255" key="2">
    <source>
        <dbReference type="PROSITE-ProRule" id="PRU00258"/>
    </source>
</evidence>
<sequence>MALIDEIKDVVANQLNISDKSKITDTASFVDDLNADSLDLVELIMELEKRYEIKIPQEDQEKIKNVADAAKYIEEHKK</sequence>
<accession>C0QYL1</accession>
<dbReference type="EMBL" id="CP001357">
    <property type="protein sequence ID" value="ACN85094.1"/>
    <property type="molecule type" value="Genomic_DNA"/>
</dbReference>
<dbReference type="RefSeq" id="WP_008724300.1">
    <property type="nucleotide sequence ID" value="NC_012225.1"/>
</dbReference>
<dbReference type="SMR" id="C0QYL1"/>
<dbReference type="STRING" id="565034.BHWA1_02643"/>
<dbReference type="GeneID" id="66488063"/>
<dbReference type="KEGG" id="bhy:BHWA1_02643"/>
<dbReference type="eggNOG" id="COG0236">
    <property type="taxonomic scope" value="Bacteria"/>
</dbReference>
<dbReference type="HOGENOM" id="CLU_108696_5_6_12"/>
<dbReference type="UniPathway" id="UPA00094"/>
<dbReference type="Proteomes" id="UP000001803">
    <property type="component" value="Chromosome"/>
</dbReference>
<dbReference type="GO" id="GO:0005829">
    <property type="term" value="C:cytosol"/>
    <property type="evidence" value="ECO:0007669"/>
    <property type="project" value="TreeGrafter"/>
</dbReference>
<dbReference type="GO" id="GO:0016020">
    <property type="term" value="C:membrane"/>
    <property type="evidence" value="ECO:0007669"/>
    <property type="project" value="GOC"/>
</dbReference>
<dbReference type="GO" id="GO:0000035">
    <property type="term" value="F:acyl binding"/>
    <property type="evidence" value="ECO:0007669"/>
    <property type="project" value="TreeGrafter"/>
</dbReference>
<dbReference type="GO" id="GO:0000036">
    <property type="term" value="F:acyl carrier activity"/>
    <property type="evidence" value="ECO:0007669"/>
    <property type="project" value="UniProtKB-UniRule"/>
</dbReference>
<dbReference type="GO" id="GO:0009245">
    <property type="term" value="P:lipid A biosynthetic process"/>
    <property type="evidence" value="ECO:0007669"/>
    <property type="project" value="TreeGrafter"/>
</dbReference>
<dbReference type="Gene3D" id="1.10.1200.10">
    <property type="entry name" value="ACP-like"/>
    <property type="match status" value="1"/>
</dbReference>
<dbReference type="HAMAP" id="MF_01217">
    <property type="entry name" value="Acyl_carrier"/>
    <property type="match status" value="1"/>
</dbReference>
<dbReference type="InterPro" id="IPR003231">
    <property type="entry name" value="ACP"/>
</dbReference>
<dbReference type="InterPro" id="IPR036736">
    <property type="entry name" value="ACP-like_sf"/>
</dbReference>
<dbReference type="InterPro" id="IPR009081">
    <property type="entry name" value="PP-bd_ACP"/>
</dbReference>
<dbReference type="InterPro" id="IPR006162">
    <property type="entry name" value="Ppantetheine_attach_site"/>
</dbReference>
<dbReference type="NCBIfam" id="TIGR00517">
    <property type="entry name" value="acyl_carrier"/>
    <property type="match status" value="1"/>
</dbReference>
<dbReference type="NCBIfam" id="NF002148">
    <property type="entry name" value="PRK00982.1-2"/>
    <property type="match status" value="1"/>
</dbReference>
<dbReference type="NCBIfam" id="NF002150">
    <property type="entry name" value="PRK00982.1-4"/>
    <property type="match status" value="1"/>
</dbReference>
<dbReference type="PANTHER" id="PTHR20863">
    <property type="entry name" value="ACYL CARRIER PROTEIN"/>
    <property type="match status" value="1"/>
</dbReference>
<dbReference type="PANTHER" id="PTHR20863:SF76">
    <property type="entry name" value="CARRIER DOMAIN-CONTAINING PROTEIN"/>
    <property type="match status" value="1"/>
</dbReference>
<dbReference type="Pfam" id="PF00550">
    <property type="entry name" value="PP-binding"/>
    <property type="match status" value="1"/>
</dbReference>
<dbReference type="SUPFAM" id="SSF47336">
    <property type="entry name" value="ACP-like"/>
    <property type="match status" value="1"/>
</dbReference>
<dbReference type="PROSITE" id="PS50075">
    <property type="entry name" value="CARRIER"/>
    <property type="match status" value="1"/>
</dbReference>
<dbReference type="PROSITE" id="PS00012">
    <property type="entry name" value="PHOSPHOPANTETHEINE"/>
    <property type="match status" value="1"/>
</dbReference>